<reference key="1">
    <citation type="journal article" date="2009" name="PLoS Genet.">
        <title>Organised genome dynamics in the Escherichia coli species results in highly diverse adaptive paths.</title>
        <authorList>
            <person name="Touchon M."/>
            <person name="Hoede C."/>
            <person name="Tenaillon O."/>
            <person name="Barbe V."/>
            <person name="Baeriswyl S."/>
            <person name="Bidet P."/>
            <person name="Bingen E."/>
            <person name="Bonacorsi S."/>
            <person name="Bouchier C."/>
            <person name="Bouvet O."/>
            <person name="Calteau A."/>
            <person name="Chiapello H."/>
            <person name="Clermont O."/>
            <person name="Cruveiller S."/>
            <person name="Danchin A."/>
            <person name="Diard M."/>
            <person name="Dossat C."/>
            <person name="Karoui M.E."/>
            <person name="Frapy E."/>
            <person name="Garry L."/>
            <person name="Ghigo J.M."/>
            <person name="Gilles A.M."/>
            <person name="Johnson J."/>
            <person name="Le Bouguenec C."/>
            <person name="Lescat M."/>
            <person name="Mangenot S."/>
            <person name="Martinez-Jehanne V."/>
            <person name="Matic I."/>
            <person name="Nassif X."/>
            <person name="Oztas S."/>
            <person name="Petit M.A."/>
            <person name="Pichon C."/>
            <person name="Rouy Z."/>
            <person name="Ruf C.S."/>
            <person name="Schneider D."/>
            <person name="Tourret J."/>
            <person name="Vacherie B."/>
            <person name="Vallenet D."/>
            <person name="Medigue C."/>
            <person name="Rocha E.P.C."/>
            <person name="Denamur E."/>
        </authorList>
    </citation>
    <scope>NUCLEOTIDE SEQUENCE [LARGE SCALE GENOMIC DNA]</scope>
    <source>
        <strain>IAI1</strain>
    </source>
</reference>
<feature type="chain" id="PRO_1000191723" description="Ion-translocating oxidoreductase complex subunit A">
    <location>
        <begin position="1"/>
        <end position="193"/>
    </location>
</feature>
<feature type="transmembrane region" description="Helical" evidence="1">
    <location>
        <begin position="5"/>
        <end position="25"/>
    </location>
</feature>
<feature type="transmembrane region" description="Helical" evidence="1">
    <location>
        <begin position="39"/>
        <end position="59"/>
    </location>
</feature>
<feature type="transmembrane region" description="Helical" evidence="1">
    <location>
        <begin position="63"/>
        <end position="83"/>
    </location>
</feature>
<feature type="transmembrane region" description="Helical" evidence="1">
    <location>
        <begin position="102"/>
        <end position="122"/>
    </location>
</feature>
<feature type="transmembrane region" description="Helical" evidence="1">
    <location>
        <begin position="134"/>
        <end position="154"/>
    </location>
</feature>
<feature type="transmembrane region" description="Helical" evidence="1">
    <location>
        <begin position="171"/>
        <end position="191"/>
    </location>
</feature>
<proteinExistence type="inferred from homology"/>
<evidence type="ECO:0000255" key="1">
    <source>
        <dbReference type="HAMAP-Rule" id="MF_00459"/>
    </source>
</evidence>
<name>RSXA_ECO8A</name>
<sequence>MTDYLLLFVGTVLVNNFVLVKFLGLCPFMGVSKKLETAMGMGLATTFVMTLASICAWLIDTWILIPLNLIYLRTLAFILVIAVVVQFTEMVVRKTSPVLYRLLGIFLPLITTNCAVLGVALLNINLGHNFLQSALYGFSAAVGFSLVMVLFAAIRERLAVADVPAPFRGNAIALITAGLMSLAFMGFSGLVKL</sequence>
<keyword id="KW-0997">Cell inner membrane</keyword>
<keyword id="KW-1003">Cell membrane</keyword>
<keyword id="KW-0249">Electron transport</keyword>
<keyword id="KW-0472">Membrane</keyword>
<keyword id="KW-1278">Translocase</keyword>
<keyword id="KW-0812">Transmembrane</keyword>
<keyword id="KW-1133">Transmembrane helix</keyword>
<keyword id="KW-0813">Transport</keyword>
<organism>
    <name type="scientific">Escherichia coli O8 (strain IAI1)</name>
    <dbReference type="NCBI Taxonomy" id="585034"/>
    <lineage>
        <taxon>Bacteria</taxon>
        <taxon>Pseudomonadati</taxon>
        <taxon>Pseudomonadota</taxon>
        <taxon>Gammaproteobacteria</taxon>
        <taxon>Enterobacterales</taxon>
        <taxon>Enterobacteriaceae</taxon>
        <taxon>Escherichia</taxon>
    </lineage>
</organism>
<gene>
    <name evidence="1" type="primary">rsxA</name>
    <name type="ordered locus">ECIAI1_1679</name>
</gene>
<dbReference type="EC" id="7.-.-.-" evidence="1"/>
<dbReference type="EMBL" id="CU928160">
    <property type="protein sequence ID" value="CAQ98536.1"/>
    <property type="molecule type" value="Genomic_DNA"/>
</dbReference>
<dbReference type="RefSeq" id="WP_000133193.1">
    <property type="nucleotide sequence ID" value="NC_011741.1"/>
</dbReference>
<dbReference type="SMR" id="B7M0I4"/>
<dbReference type="GeneID" id="89516393"/>
<dbReference type="KEGG" id="ecr:ECIAI1_1679"/>
<dbReference type="HOGENOM" id="CLU_095255_1_0_6"/>
<dbReference type="GO" id="GO:0005886">
    <property type="term" value="C:plasma membrane"/>
    <property type="evidence" value="ECO:0007669"/>
    <property type="project" value="UniProtKB-SubCell"/>
</dbReference>
<dbReference type="GO" id="GO:0022900">
    <property type="term" value="P:electron transport chain"/>
    <property type="evidence" value="ECO:0007669"/>
    <property type="project" value="UniProtKB-UniRule"/>
</dbReference>
<dbReference type="HAMAP" id="MF_00459">
    <property type="entry name" value="RsxA_RnfA"/>
    <property type="match status" value="1"/>
</dbReference>
<dbReference type="InterPro" id="IPR011293">
    <property type="entry name" value="Ion_transpt_RnfA/RsxA"/>
</dbReference>
<dbReference type="InterPro" id="IPR003667">
    <property type="entry name" value="NqrDE/RnfAE"/>
</dbReference>
<dbReference type="InterPro" id="IPR050133">
    <property type="entry name" value="NqrDE/RnfAE_oxidrdctase"/>
</dbReference>
<dbReference type="NCBIfam" id="NF003481">
    <property type="entry name" value="PRK05151.1"/>
    <property type="match status" value="1"/>
</dbReference>
<dbReference type="NCBIfam" id="TIGR01943">
    <property type="entry name" value="rnfA"/>
    <property type="match status" value="1"/>
</dbReference>
<dbReference type="PANTHER" id="PTHR30335">
    <property type="entry name" value="INTEGRAL MEMBRANE PROTEIN OF SOXR-REDUCING COMPLEX"/>
    <property type="match status" value="1"/>
</dbReference>
<dbReference type="PANTHER" id="PTHR30335:SF0">
    <property type="entry name" value="ION-TRANSLOCATING OXIDOREDUCTASE COMPLEX SUBUNIT A"/>
    <property type="match status" value="1"/>
</dbReference>
<dbReference type="Pfam" id="PF02508">
    <property type="entry name" value="Rnf-Nqr"/>
    <property type="match status" value="1"/>
</dbReference>
<dbReference type="PIRSF" id="PIRSF006102">
    <property type="entry name" value="NQR_DE"/>
    <property type="match status" value="1"/>
</dbReference>
<accession>B7M0I4</accession>
<protein>
    <recommendedName>
        <fullName evidence="1">Ion-translocating oxidoreductase complex subunit A</fullName>
        <ecNumber evidence="1">7.-.-.-</ecNumber>
    </recommendedName>
    <alternativeName>
        <fullName evidence="1">Rsx electron transport complex subunit A</fullName>
    </alternativeName>
</protein>
<comment type="function">
    <text evidence="1">Part of a membrane-bound complex that couples electron transfer with translocation of ions across the membrane. Required to maintain the reduced state of SoxR.</text>
</comment>
<comment type="subunit">
    <text evidence="1">The complex is composed of six subunits: RsxA, RsxB, RsxC, RsxD, RsxE and RsxG.</text>
</comment>
<comment type="subcellular location">
    <subcellularLocation>
        <location evidence="1">Cell inner membrane</location>
        <topology evidence="1">Multi-pass membrane protein</topology>
    </subcellularLocation>
</comment>
<comment type="similarity">
    <text evidence="1">Belongs to the NqrDE/RnfAE family.</text>
</comment>